<evidence type="ECO:0000255" key="1">
    <source>
        <dbReference type="HAMAP-Rule" id="MF_00060"/>
    </source>
</evidence>
<reference key="1">
    <citation type="journal article" date="2011" name="J. Bacteriol.">
        <title>Complete genome sequence of the metabolically versatile plant growth-promoting endophyte, Variovorax paradoxus S110.</title>
        <authorList>
            <person name="Han J.I."/>
            <person name="Choi H.K."/>
            <person name="Lee S.W."/>
            <person name="Orwin P.M."/>
            <person name="Kim J."/>
            <person name="Laroe S.L."/>
            <person name="Kim T.G."/>
            <person name="O'Neil J."/>
            <person name="Leadbetter J.R."/>
            <person name="Lee S.Y."/>
            <person name="Hur C.G."/>
            <person name="Spain J.C."/>
            <person name="Ovchinnikova G."/>
            <person name="Goodwin L."/>
            <person name="Han C."/>
        </authorList>
    </citation>
    <scope>NUCLEOTIDE SEQUENCE [LARGE SCALE GENOMIC DNA]</scope>
    <source>
        <strain>S110</strain>
    </source>
</reference>
<dbReference type="EC" id="3.1.3.5" evidence="1"/>
<dbReference type="EMBL" id="CP001635">
    <property type="protein sequence ID" value="ACS18447.1"/>
    <property type="molecule type" value="Genomic_DNA"/>
</dbReference>
<dbReference type="SMR" id="C5CUL9"/>
<dbReference type="STRING" id="543728.Vapar_1797"/>
<dbReference type="KEGG" id="vap:Vapar_1797"/>
<dbReference type="eggNOG" id="COG0496">
    <property type="taxonomic scope" value="Bacteria"/>
</dbReference>
<dbReference type="HOGENOM" id="CLU_045192_1_2_4"/>
<dbReference type="OrthoDB" id="9780815at2"/>
<dbReference type="GO" id="GO:0005737">
    <property type="term" value="C:cytoplasm"/>
    <property type="evidence" value="ECO:0007669"/>
    <property type="project" value="UniProtKB-SubCell"/>
</dbReference>
<dbReference type="GO" id="GO:0008254">
    <property type="term" value="F:3'-nucleotidase activity"/>
    <property type="evidence" value="ECO:0007669"/>
    <property type="project" value="TreeGrafter"/>
</dbReference>
<dbReference type="GO" id="GO:0008253">
    <property type="term" value="F:5'-nucleotidase activity"/>
    <property type="evidence" value="ECO:0007669"/>
    <property type="project" value="UniProtKB-UniRule"/>
</dbReference>
<dbReference type="GO" id="GO:0004309">
    <property type="term" value="F:exopolyphosphatase activity"/>
    <property type="evidence" value="ECO:0007669"/>
    <property type="project" value="TreeGrafter"/>
</dbReference>
<dbReference type="GO" id="GO:0046872">
    <property type="term" value="F:metal ion binding"/>
    <property type="evidence" value="ECO:0007669"/>
    <property type="project" value="UniProtKB-UniRule"/>
</dbReference>
<dbReference type="GO" id="GO:0000166">
    <property type="term" value="F:nucleotide binding"/>
    <property type="evidence" value="ECO:0007669"/>
    <property type="project" value="UniProtKB-KW"/>
</dbReference>
<dbReference type="FunFam" id="3.40.1210.10:FF:000001">
    <property type="entry name" value="5'/3'-nucleotidase SurE"/>
    <property type="match status" value="1"/>
</dbReference>
<dbReference type="Gene3D" id="3.40.1210.10">
    <property type="entry name" value="Survival protein SurE-like phosphatase/nucleotidase"/>
    <property type="match status" value="1"/>
</dbReference>
<dbReference type="HAMAP" id="MF_00060">
    <property type="entry name" value="SurE"/>
    <property type="match status" value="1"/>
</dbReference>
<dbReference type="InterPro" id="IPR030048">
    <property type="entry name" value="SurE"/>
</dbReference>
<dbReference type="InterPro" id="IPR002828">
    <property type="entry name" value="SurE-like_Pase/nucleotidase"/>
</dbReference>
<dbReference type="InterPro" id="IPR036523">
    <property type="entry name" value="SurE-like_sf"/>
</dbReference>
<dbReference type="NCBIfam" id="NF001489">
    <property type="entry name" value="PRK00346.1-3"/>
    <property type="match status" value="1"/>
</dbReference>
<dbReference type="NCBIfam" id="NF001490">
    <property type="entry name" value="PRK00346.1-4"/>
    <property type="match status" value="1"/>
</dbReference>
<dbReference type="NCBIfam" id="TIGR00087">
    <property type="entry name" value="surE"/>
    <property type="match status" value="1"/>
</dbReference>
<dbReference type="PANTHER" id="PTHR30457">
    <property type="entry name" value="5'-NUCLEOTIDASE SURE"/>
    <property type="match status" value="1"/>
</dbReference>
<dbReference type="PANTHER" id="PTHR30457:SF12">
    <property type="entry name" value="5'_3'-NUCLEOTIDASE SURE"/>
    <property type="match status" value="1"/>
</dbReference>
<dbReference type="Pfam" id="PF01975">
    <property type="entry name" value="SurE"/>
    <property type="match status" value="1"/>
</dbReference>
<dbReference type="SUPFAM" id="SSF64167">
    <property type="entry name" value="SurE-like"/>
    <property type="match status" value="1"/>
</dbReference>
<organism>
    <name type="scientific">Variovorax paradoxus (strain S110)</name>
    <dbReference type="NCBI Taxonomy" id="543728"/>
    <lineage>
        <taxon>Bacteria</taxon>
        <taxon>Pseudomonadati</taxon>
        <taxon>Pseudomonadota</taxon>
        <taxon>Betaproteobacteria</taxon>
        <taxon>Burkholderiales</taxon>
        <taxon>Comamonadaceae</taxon>
        <taxon>Variovorax</taxon>
    </lineage>
</organism>
<name>SURE_VARPS</name>
<keyword id="KW-0963">Cytoplasm</keyword>
<keyword id="KW-0378">Hydrolase</keyword>
<keyword id="KW-0479">Metal-binding</keyword>
<keyword id="KW-0547">Nucleotide-binding</keyword>
<accession>C5CUL9</accession>
<proteinExistence type="inferred from homology"/>
<comment type="function">
    <text evidence="1">Nucleotidase that shows phosphatase activity on nucleoside 5'-monophosphates.</text>
</comment>
<comment type="catalytic activity">
    <reaction evidence="1">
        <text>a ribonucleoside 5'-phosphate + H2O = a ribonucleoside + phosphate</text>
        <dbReference type="Rhea" id="RHEA:12484"/>
        <dbReference type="ChEBI" id="CHEBI:15377"/>
        <dbReference type="ChEBI" id="CHEBI:18254"/>
        <dbReference type="ChEBI" id="CHEBI:43474"/>
        <dbReference type="ChEBI" id="CHEBI:58043"/>
        <dbReference type="EC" id="3.1.3.5"/>
    </reaction>
</comment>
<comment type="cofactor">
    <cofactor evidence="1">
        <name>a divalent metal cation</name>
        <dbReference type="ChEBI" id="CHEBI:60240"/>
    </cofactor>
    <text evidence="1">Binds 1 divalent metal cation per subunit.</text>
</comment>
<comment type="subcellular location">
    <subcellularLocation>
        <location evidence="1">Cytoplasm</location>
    </subcellularLocation>
</comment>
<comment type="similarity">
    <text evidence="1">Belongs to the SurE nucleotidase family.</text>
</comment>
<gene>
    <name evidence="1" type="primary">surE</name>
    <name type="ordered locus">Vapar_1797</name>
</gene>
<feature type="chain" id="PRO_1000202374" description="5'-nucleotidase SurE">
    <location>
        <begin position="1"/>
        <end position="252"/>
    </location>
</feature>
<feature type="binding site" evidence="1">
    <location>
        <position position="8"/>
    </location>
    <ligand>
        <name>a divalent metal cation</name>
        <dbReference type="ChEBI" id="CHEBI:60240"/>
    </ligand>
</feature>
<feature type="binding site" evidence="1">
    <location>
        <position position="9"/>
    </location>
    <ligand>
        <name>a divalent metal cation</name>
        <dbReference type="ChEBI" id="CHEBI:60240"/>
    </ligand>
</feature>
<feature type="binding site" evidence="1">
    <location>
        <position position="39"/>
    </location>
    <ligand>
        <name>a divalent metal cation</name>
        <dbReference type="ChEBI" id="CHEBI:60240"/>
    </ligand>
</feature>
<feature type="binding site" evidence="1">
    <location>
        <position position="91"/>
    </location>
    <ligand>
        <name>a divalent metal cation</name>
        <dbReference type="ChEBI" id="CHEBI:60240"/>
    </ligand>
</feature>
<sequence>MKILISNDDGFQAPGIVALHDALKDIADVEVVAPEHNNSAKSNALTLAAPLYVHKAHNGFRYVTGTPADCVHIALKGLLGYRPDLVVSGINNGANMGDDTIYSGTVGAAMEAYLFGIPAIAFSQIEKGWAHVDAAAQVARRLVQQIERERMLDGGAFLLNVNVPNRPLQELKPIQVCRLGRRHSAEKVITQESPRGETMYWIAGAGGAKDSGEGTDFHATAAGHIALTPLQIDLTDHANLGQWRETVARLGN</sequence>
<protein>
    <recommendedName>
        <fullName evidence="1">5'-nucleotidase SurE</fullName>
        <ecNumber evidence="1">3.1.3.5</ecNumber>
    </recommendedName>
    <alternativeName>
        <fullName evidence="1">Nucleoside 5'-monophosphate phosphohydrolase</fullName>
    </alternativeName>
</protein>